<name>NUCS_AERPE</name>
<accession>Q9YDF6</accession>
<gene>
    <name evidence="1" type="primary">nucS</name>
    <name type="ordered locus">APE_0957</name>
</gene>
<protein>
    <recommendedName>
        <fullName evidence="1">Endonuclease NucS</fullName>
        <ecNumber evidence="1">3.1.-.-</ecNumber>
    </recommendedName>
</protein>
<reference key="1">
    <citation type="journal article" date="1999" name="DNA Res.">
        <title>Complete genome sequence of an aerobic hyper-thermophilic crenarchaeon, Aeropyrum pernix K1.</title>
        <authorList>
            <person name="Kawarabayasi Y."/>
            <person name="Hino Y."/>
            <person name="Horikawa H."/>
            <person name="Yamazaki S."/>
            <person name="Haikawa Y."/>
            <person name="Jin-no K."/>
            <person name="Takahashi M."/>
            <person name="Sekine M."/>
            <person name="Baba S."/>
            <person name="Ankai A."/>
            <person name="Kosugi H."/>
            <person name="Hosoyama A."/>
            <person name="Fukui S."/>
            <person name="Nagai Y."/>
            <person name="Nishijima K."/>
            <person name="Nakazawa H."/>
            <person name="Takamiya M."/>
            <person name="Masuda S."/>
            <person name="Funahashi T."/>
            <person name="Tanaka T."/>
            <person name="Kudoh Y."/>
            <person name="Yamazaki J."/>
            <person name="Kushida N."/>
            <person name="Oguchi A."/>
            <person name="Aoki K."/>
            <person name="Kubota K."/>
            <person name="Nakamura Y."/>
            <person name="Nomura N."/>
            <person name="Sako Y."/>
            <person name="Kikuchi H."/>
        </authorList>
    </citation>
    <scope>NUCLEOTIDE SEQUENCE [LARGE SCALE GENOMIC DNA]</scope>
    <source>
        <strain>ATCC 700893 / DSM 11879 / JCM 9820 / NBRC 100138 / K1</strain>
    </source>
</reference>
<sequence>MSQEASVDGRFGVASSPTIEEAAGLLEKLLDGSSMVVVAGVCSSEYEGRGASVSTEGDKLLIVKPGGAVILHGPRGFRPLNWQPSTSHTEVATADGLLTLKFYRRTPREVLKIACGSIWYIAWVRFPEEGAFWMYMTEDDLRKAVALHPRELLGEDIRFFAEEKRTPSGKADLYGVDERGNIVIVEVKRVRADESAVRQLEGYVRDYPTQAKVRGILVAPDISDAARRLLESRGLEFRRVDLKKAYSLLKPGRGRSVLDFL</sequence>
<feature type="chain" id="PRO_0000155688" description="Endonuclease NucS">
    <location>
        <begin position="1"/>
        <end position="261"/>
    </location>
</feature>
<dbReference type="EC" id="3.1.-.-" evidence="1"/>
<dbReference type="EMBL" id="BA000002">
    <property type="protein sequence ID" value="BAA79941.1"/>
    <property type="molecule type" value="Genomic_DNA"/>
</dbReference>
<dbReference type="PIR" id="E72692">
    <property type="entry name" value="E72692"/>
</dbReference>
<dbReference type="RefSeq" id="WP_010866094.1">
    <property type="nucleotide sequence ID" value="NC_000854.2"/>
</dbReference>
<dbReference type="SMR" id="Q9YDF6"/>
<dbReference type="STRING" id="272557.APE_0957"/>
<dbReference type="EnsemblBacteria" id="BAA79941">
    <property type="protein sequence ID" value="BAA79941"/>
    <property type="gene ID" value="APE_0957"/>
</dbReference>
<dbReference type="GeneID" id="1445033"/>
<dbReference type="KEGG" id="ape:APE_0957"/>
<dbReference type="PATRIC" id="fig|272557.25.peg.688"/>
<dbReference type="eggNOG" id="arCOG01304">
    <property type="taxonomic scope" value="Archaea"/>
</dbReference>
<dbReference type="Proteomes" id="UP000002518">
    <property type="component" value="Chromosome"/>
</dbReference>
<dbReference type="GO" id="GO:0005737">
    <property type="term" value="C:cytoplasm"/>
    <property type="evidence" value="ECO:0007669"/>
    <property type="project" value="UniProtKB-SubCell"/>
</dbReference>
<dbReference type="GO" id="GO:0003677">
    <property type="term" value="F:DNA binding"/>
    <property type="evidence" value="ECO:0007669"/>
    <property type="project" value="UniProtKB-KW"/>
</dbReference>
<dbReference type="GO" id="GO:0000014">
    <property type="term" value="F:single-stranded DNA endodeoxyribonuclease activity"/>
    <property type="evidence" value="ECO:0007669"/>
    <property type="project" value="UniProtKB-UniRule"/>
</dbReference>
<dbReference type="CDD" id="cd22341">
    <property type="entry name" value="NucS-like"/>
    <property type="match status" value="1"/>
</dbReference>
<dbReference type="Gene3D" id="2.70.180.20">
    <property type="match status" value="1"/>
</dbReference>
<dbReference type="Gene3D" id="3.40.1350.10">
    <property type="match status" value="1"/>
</dbReference>
<dbReference type="HAMAP" id="MF_00722">
    <property type="entry name" value="NucS"/>
    <property type="match status" value="1"/>
</dbReference>
<dbReference type="InterPro" id="IPR002793">
    <property type="entry name" value="Endonuclease_NucS"/>
</dbReference>
<dbReference type="InterPro" id="IPR048301">
    <property type="entry name" value="NucS_C"/>
</dbReference>
<dbReference type="InterPro" id="IPR048302">
    <property type="entry name" value="NucS_N"/>
</dbReference>
<dbReference type="InterPro" id="IPR049173">
    <property type="entry name" value="NucS_N_sf"/>
</dbReference>
<dbReference type="InterPro" id="IPR011856">
    <property type="entry name" value="tRNA_endonuc-like_dom_sf"/>
</dbReference>
<dbReference type="NCBIfam" id="NF003270">
    <property type="entry name" value="PRK04247.1"/>
    <property type="match status" value="1"/>
</dbReference>
<dbReference type="PANTHER" id="PTHR38814">
    <property type="entry name" value="ENDONUCLEASE NUCS"/>
    <property type="match status" value="1"/>
</dbReference>
<dbReference type="PANTHER" id="PTHR38814:SF1">
    <property type="entry name" value="ENDONUCLEASE NUCS"/>
    <property type="match status" value="1"/>
</dbReference>
<dbReference type="Pfam" id="PF01939">
    <property type="entry name" value="NucS_C"/>
    <property type="match status" value="1"/>
</dbReference>
<dbReference type="Pfam" id="PF21003">
    <property type="entry name" value="NucS_N"/>
    <property type="match status" value="1"/>
</dbReference>
<keyword id="KW-0963">Cytoplasm</keyword>
<keyword id="KW-0238">DNA-binding</keyword>
<keyword id="KW-0255">Endonuclease</keyword>
<keyword id="KW-0378">Hydrolase</keyword>
<keyword id="KW-0540">Nuclease</keyword>
<keyword id="KW-1185">Reference proteome</keyword>
<organism>
    <name type="scientific">Aeropyrum pernix (strain ATCC 700893 / DSM 11879 / JCM 9820 / NBRC 100138 / K1)</name>
    <dbReference type="NCBI Taxonomy" id="272557"/>
    <lineage>
        <taxon>Archaea</taxon>
        <taxon>Thermoproteota</taxon>
        <taxon>Thermoprotei</taxon>
        <taxon>Desulfurococcales</taxon>
        <taxon>Desulfurococcaceae</taxon>
        <taxon>Aeropyrum</taxon>
    </lineage>
</organism>
<proteinExistence type="inferred from homology"/>
<comment type="function">
    <text evidence="1">Cleaves both 3' and 5' ssDNA extremities of branched DNA structures.</text>
</comment>
<comment type="subcellular location">
    <subcellularLocation>
        <location evidence="1">Cytoplasm</location>
    </subcellularLocation>
</comment>
<comment type="similarity">
    <text evidence="1">Belongs to the NucS endonuclease family.</text>
</comment>
<evidence type="ECO:0000255" key="1">
    <source>
        <dbReference type="HAMAP-Rule" id="MF_00722"/>
    </source>
</evidence>